<organism>
    <name type="scientific">Porphyra purpurea</name>
    <name type="common">Red seaweed</name>
    <name type="synonym">Ulva purpurea</name>
    <dbReference type="NCBI Taxonomy" id="2787"/>
    <lineage>
        <taxon>Eukaryota</taxon>
        <taxon>Rhodophyta</taxon>
        <taxon>Bangiophyceae</taxon>
        <taxon>Bangiales</taxon>
        <taxon>Bangiaceae</taxon>
        <taxon>Porphyra</taxon>
    </lineage>
</organism>
<sequence length="81" mass="8829">MAHSVKVYDTCIGCTQCVRACPCDVLEMVPWDGCKAKQIASAPRTEDCIGCKRCETACPTDFLSVRVYLGAETTRSMGLAY</sequence>
<evidence type="ECO:0000250" key="1"/>
<evidence type="ECO:0000255" key="2">
    <source>
        <dbReference type="HAMAP-Rule" id="MF_01303"/>
    </source>
</evidence>
<feature type="initiator methionine" description="Removed" evidence="1">
    <location>
        <position position="1"/>
    </location>
</feature>
<feature type="chain" id="PRO_0000062000" description="Photosystem I iron-sulfur center">
    <location>
        <begin position="2"/>
        <end position="81"/>
    </location>
</feature>
<feature type="domain" description="4Fe-4S ferredoxin-type 1" evidence="2">
    <location>
        <begin position="2"/>
        <end position="31"/>
    </location>
</feature>
<feature type="domain" description="4Fe-4S ferredoxin-type 2" evidence="2">
    <location>
        <begin position="39"/>
        <end position="68"/>
    </location>
</feature>
<feature type="binding site" evidence="2">
    <location>
        <position position="11"/>
    </location>
    <ligand>
        <name>[4Fe-4S] cluster</name>
        <dbReference type="ChEBI" id="CHEBI:49883"/>
        <label>1</label>
    </ligand>
</feature>
<feature type="binding site" evidence="2">
    <location>
        <position position="14"/>
    </location>
    <ligand>
        <name>[4Fe-4S] cluster</name>
        <dbReference type="ChEBI" id="CHEBI:49883"/>
        <label>1</label>
    </ligand>
</feature>
<feature type="binding site" evidence="2">
    <location>
        <position position="17"/>
    </location>
    <ligand>
        <name>[4Fe-4S] cluster</name>
        <dbReference type="ChEBI" id="CHEBI:49883"/>
        <label>1</label>
    </ligand>
</feature>
<feature type="binding site" evidence="2">
    <location>
        <position position="21"/>
    </location>
    <ligand>
        <name>[4Fe-4S] cluster</name>
        <dbReference type="ChEBI" id="CHEBI:49883"/>
        <label>2</label>
    </ligand>
</feature>
<feature type="binding site" evidence="2">
    <location>
        <position position="48"/>
    </location>
    <ligand>
        <name>[4Fe-4S] cluster</name>
        <dbReference type="ChEBI" id="CHEBI:49883"/>
        <label>2</label>
    </ligand>
</feature>
<feature type="binding site" evidence="2">
    <location>
        <position position="51"/>
    </location>
    <ligand>
        <name>[4Fe-4S] cluster</name>
        <dbReference type="ChEBI" id="CHEBI:49883"/>
        <label>2</label>
    </ligand>
</feature>
<feature type="binding site" evidence="2">
    <location>
        <position position="54"/>
    </location>
    <ligand>
        <name>[4Fe-4S] cluster</name>
        <dbReference type="ChEBI" id="CHEBI:49883"/>
        <label>2</label>
    </ligand>
</feature>
<feature type="binding site" evidence="2">
    <location>
        <position position="58"/>
    </location>
    <ligand>
        <name>[4Fe-4S] cluster</name>
        <dbReference type="ChEBI" id="CHEBI:49883"/>
        <label>1</label>
    </ligand>
</feature>
<comment type="function">
    <text>Apoprotein for the two 4Fe-4S centers FA and FB of photosystem I (PSI); essential for photochemical activity. FB is the terminal electron acceptor of PSI, donating electrons to ferredoxin. The C-terminus interacts with PsaA/B/D and helps assemble the protein into the PSI complex. Required for binding of PsaD and PsaE to PSI. PSI is a plastocyanin/cytochrome c6-ferredoxin oxidoreductase, converting photonic excitation into a charge separation, which transfers an electron from the donor P700 chlorophyll pair to the spectroscopically characterized acceptors A0, A1, FX, FA and FB in turn.</text>
</comment>
<comment type="catalytic activity">
    <reaction evidence="2">
        <text>reduced [plastocyanin] + hnu + oxidized [2Fe-2S]-[ferredoxin] = oxidized [plastocyanin] + reduced [2Fe-2S]-[ferredoxin]</text>
        <dbReference type="Rhea" id="RHEA:30407"/>
        <dbReference type="Rhea" id="RHEA-COMP:10000"/>
        <dbReference type="Rhea" id="RHEA-COMP:10001"/>
        <dbReference type="Rhea" id="RHEA-COMP:10039"/>
        <dbReference type="Rhea" id="RHEA-COMP:10040"/>
        <dbReference type="ChEBI" id="CHEBI:29036"/>
        <dbReference type="ChEBI" id="CHEBI:30212"/>
        <dbReference type="ChEBI" id="CHEBI:33737"/>
        <dbReference type="ChEBI" id="CHEBI:33738"/>
        <dbReference type="ChEBI" id="CHEBI:49552"/>
        <dbReference type="EC" id="1.97.1.12"/>
    </reaction>
</comment>
<comment type="cofactor">
    <cofactor evidence="2">
        <name>[4Fe-4S] cluster</name>
        <dbReference type="ChEBI" id="CHEBI:49883"/>
    </cofactor>
    <text evidence="2">Binds 2 [4Fe-4S] clusters. Cluster 2 is most probably the spectroscopically characterized electron acceptor FA and cluster 1 is most probably FB.</text>
</comment>
<comment type="subunit">
    <text evidence="2">The eukaryotic PSI reaction center is composed of at least 11 subunits.</text>
</comment>
<comment type="subcellular location">
    <subcellularLocation>
        <location evidence="2">Plastid</location>
        <location evidence="2">Chloroplast thylakoid membrane</location>
        <topology evidence="2">Peripheral membrane protein</topology>
        <orientation evidence="2">Stromal side</orientation>
    </subcellularLocation>
</comment>
<protein>
    <recommendedName>
        <fullName evidence="2">Photosystem I iron-sulfur center</fullName>
        <ecNumber evidence="2">1.97.1.12</ecNumber>
    </recommendedName>
    <alternativeName>
        <fullName evidence="2">9 kDa polypeptide</fullName>
    </alternativeName>
    <alternativeName>
        <fullName evidence="2">PSI-C</fullName>
    </alternativeName>
    <alternativeName>
        <fullName evidence="2">Photosystem I subunit VII</fullName>
    </alternativeName>
    <alternativeName>
        <fullName evidence="2">PsaC</fullName>
    </alternativeName>
</protein>
<accession>P51374</accession>
<reference key="1">
    <citation type="journal article" date="1995" name="Plant Mol. Biol. Rep.">
        <title>Complete nucleotide sequence of the Porphyra purpurea chloroplast genome.</title>
        <authorList>
            <person name="Reith M.E."/>
            <person name="Munholland J."/>
        </authorList>
    </citation>
    <scope>NUCLEOTIDE SEQUENCE [LARGE SCALE GENOMIC DNA]</scope>
    <source>
        <strain>Avonport</strain>
    </source>
</reference>
<keyword id="KW-0004">4Fe-4S</keyword>
<keyword id="KW-0150">Chloroplast</keyword>
<keyword id="KW-0249">Electron transport</keyword>
<keyword id="KW-0408">Iron</keyword>
<keyword id="KW-0411">Iron-sulfur</keyword>
<keyword id="KW-0472">Membrane</keyword>
<keyword id="KW-0479">Metal-binding</keyword>
<keyword id="KW-0560">Oxidoreductase</keyword>
<keyword id="KW-0602">Photosynthesis</keyword>
<keyword id="KW-0603">Photosystem I</keyword>
<keyword id="KW-0934">Plastid</keyword>
<keyword id="KW-0677">Repeat</keyword>
<keyword id="KW-0793">Thylakoid</keyword>
<keyword id="KW-0813">Transport</keyword>
<proteinExistence type="inferred from homology"/>
<geneLocation type="chloroplast"/>
<dbReference type="EC" id="1.97.1.12" evidence="2"/>
<dbReference type="EMBL" id="U38804">
    <property type="protein sequence ID" value="AAC08260.1"/>
    <property type="molecule type" value="Genomic_DNA"/>
</dbReference>
<dbReference type="PIR" id="S73295">
    <property type="entry name" value="S73295"/>
</dbReference>
<dbReference type="RefSeq" id="NP_053984.1">
    <property type="nucleotide sequence ID" value="NC_000925.1"/>
</dbReference>
<dbReference type="SMR" id="P51374"/>
<dbReference type="GeneID" id="810014"/>
<dbReference type="GO" id="GO:0009535">
    <property type="term" value="C:chloroplast thylakoid membrane"/>
    <property type="evidence" value="ECO:0007669"/>
    <property type="project" value="UniProtKB-SubCell"/>
</dbReference>
<dbReference type="GO" id="GO:0009522">
    <property type="term" value="C:photosystem I"/>
    <property type="evidence" value="ECO:0007669"/>
    <property type="project" value="UniProtKB-KW"/>
</dbReference>
<dbReference type="GO" id="GO:0051539">
    <property type="term" value="F:4 iron, 4 sulfur cluster binding"/>
    <property type="evidence" value="ECO:0007669"/>
    <property type="project" value="UniProtKB-KW"/>
</dbReference>
<dbReference type="GO" id="GO:0009055">
    <property type="term" value="F:electron transfer activity"/>
    <property type="evidence" value="ECO:0007669"/>
    <property type="project" value="UniProtKB-UniRule"/>
</dbReference>
<dbReference type="GO" id="GO:0046872">
    <property type="term" value="F:metal ion binding"/>
    <property type="evidence" value="ECO:0007669"/>
    <property type="project" value="UniProtKB-KW"/>
</dbReference>
<dbReference type="GO" id="GO:0016491">
    <property type="term" value="F:oxidoreductase activity"/>
    <property type="evidence" value="ECO:0007669"/>
    <property type="project" value="UniProtKB-KW"/>
</dbReference>
<dbReference type="GO" id="GO:0009773">
    <property type="term" value="P:photosynthetic electron transport in photosystem I"/>
    <property type="evidence" value="ECO:0007669"/>
    <property type="project" value="InterPro"/>
</dbReference>
<dbReference type="FunFam" id="3.30.70.20:FF:000001">
    <property type="entry name" value="Photosystem I iron-sulfur center"/>
    <property type="match status" value="1"/>
</dbReference>
<dbReference type="Gene3D" id="3.30.70.20">
    <property type="match status" value="1"/>
</dbReference>
<dbReference type="HAMAP" id="MF_01303">
    <property type="entry name" value="PSI_PsaC"/>
    <property type="match status" value="1"/>
</dbReference>
<dbReference type="InterPro" id="IPR017896">
    <property type="entry name" value="4Fe4S_Fe-S-bd"/>
</dbReference>
<dbReference type="InterPro" id="IPR017900">
    <property type="entry name" value="4Fe4S_Fe_S_CS"/>
</dbReference>
<dbReference type="InterPro" id="IPR050157">
    <property type="entry name" value="PSI_iron-sulfur_center"/>
</dbReference>
<dbReference type="InterPro" id="IPR017491">
    <property type="entry name" value="PSI_PsaC"/>
</dbReference>
<dbReference type="NCBIfam" id="TIGR03048">
    <property type="entry name" value="PS_I_psaC"/>
    <property type="match status" value="1"/>
</dbReference>
<dbReference type="PANTHER" id="PTHR24960:SF79">
    <property type="entry name" value="PHOTOSYSTEM I IRON-SULFUR CENTER"/>
    <property type="match status" value="1"/>
</dbReference>
<dbReference type="PANTHER" id="PTHR24960">
    <property type="entry name" value="PHOTOSYSTEM I IRON-SULFUR CENTER-RELATED"/>
    <property type="match status" value="1"/>
</dbReference>
<dbReference type="Pfam" id="PF12838">
    <property type="entry name" value="Fer4_7"/>
    <property type="match status" value="1"/>
</dbReference>
<dbReference type="SUPFAM" id="SSF54862">
    <property type="entry name" value="4Fe-4S ferredoxins"/>
    <property type="match status" value="1"/>
</dbReference>
<dbReference type="PROSITE" id="PS00198">
    <property type="entry name" value="4FE4S_FER_1"/>
    <property type="match status" value="2"/>
</dbReference>
<dbReference type="PROSITE" id="PS51379">
    <property type="entry name" value="4FE4S_FER_2"/>
    <property type="match status" value="2"/>
</dbReference>
<gene>
    <name evidence="2" type="primary">psaC</name>
</gene>
<name>PSAC_PORPU</name>